<comment type="similarity">
    <text evidence="1">Belongs to the universal ribosomal protein uL29 family.</text>
</comment>
<proteinExistence type="inferred from homology"/>
<dbReference type="EMBL" id="CP000667">
    <property type="protein sequence ID" value="ABP56345.1"/>
    <property type="molecule type" value="Genomic_DNA"/>
</dbReference>
<dbReference type="RefSeq" id="WP_012015118.1">
    <property type="nucleotide sequence ID" value="NC_009380.1"/>
</dbReference>
<dbReference type="SMR" id="A4XBN8"/>
<dbReference type="STRING" id="369723.Strop_3915"/>
<dbReference type="KEGG" id="stp:Strop_3915"/>
<dbReference type="PATRIC" id="fig|391037.6.peg.4348"/>
<dbReference type="eggNOG" id="COG0255">
    <property type="taxonomic scope" value="Bacteria"/>
</dbReference>
<dbReference type="HOGENOM" id="CLU_158491_3_3_11"/>
<dbReference type="Proteomes" id="UP000000235">
    <property type="component" value="Chromosome"/>
</dbReference>
<dbReference type="GO" id="GO:0022625">
    <property type="term" value="C:cytosolic large ribosomal subunit"/>
    <property type="evidence" value="ECO:0007669"/>
    <property type="project" value="TreeGrafter"/>
</dbReference>
<dbReference type="GO" id="GO:0003735">
    <property type="term" value="F:structural constituent of ribosome"/>
    <property type="evidence" value="ECO:0007669"/>
    <property type="project" value="InterPro"/>
</dbReference>
<dbReference type="GO" id="GO:0006412">
    <property type="term" value="P:translation"/>
    <property type="evidence" value="ECO:0007669"/>
    <property type="project" value="UniProtKB-UniRule"/>
</dbReference>
<dbReference type="CDD" id="cd00427">
    <property type="entry name" value="Ribosomal_L29_HIP"/>
    <property type="match status" value="1"/>
</dbReference>
<dbReference type="FunFam" id="1.10.287.310:FF:000001">
    <property type="entry name" value="50S ribosomal protein L29"/>
    <property type="match status" value="1"/>
</dbReference>
<dbReference type="Gene3D" id="1.10.287.310">
    <property type="match status" value="1"/>
</dbReference>
<dbReference type="HAMAP" id="MF_00374">
    <property type="entry name" value="Ribosomal_uL29"/>
    <property type="match status" value="1"/>
</dbReference>
<dbReference type="InterPro" id="IPR050063">
    <property type="entry name" value="Ribosomal_protein_uL29"/>
</dbReference>
<dbReference type="InterPro" id="IPR001854">
    <property type="entry name" value="Ribosomal_uL29"/>
</dbReference>
<dbReference type="InterPro" id="IPR036049">
    <property type="entry name" value="Ribosomal_uL29_sf"/>
</dbReference>
<dbReference type="NCBIfam" id="TIGR00012">
    <property type="entry name" value="L29"/>
    <property type="match status" value="1"/>
</dbReference>
<dbReference type="PANTHER" id="PTHR10916">
    <property type="entry name" value="60S RIBOSOMAL PROTEIN L35/50S RIBOSOMAL PROTEIN L29"/>
    <property type="match status" value="1"/>
</dbReference>
<dbReference type="PANTHER" id="PTHR10916:SF0">
    <property type="entry name" value="LARGE RIBOSOMAL SUBUNIT PROTEIN UL29C"/>
    <property type="match status" value="1"/>
</dbReference>
<dbReference type="Pfam" id="PF00831">
    <property type="entry name" value="Ribosomal_L29"/>
    <property type="match status" value="1"/>
</dbReference>
<dbReference type="SUPFAM" id="SSF46561">
    <property type="entry name" value="Ribosomal protein L29 (L29p)"/>
    <property type="match status" value="1"/>
</dbReference>
<keyword id="KW-1185">Reference proteome</keyword>
<keyword id="KW-0687">Ribonucleoprotein</keyword>
<keyword id="KW-0689">Ribosomal protein</keyword>
<reference key="1">
    <citation type="journal article" date="2007" name="Proc. Natl. Acad. Sci. U.S.A.">
        <title>Genome sequencing reveals complex secondary metabolome in the marine actinomycete Salinispora tropica.</title>
        <authorList>
            <person name="Udwary D.W."/>
            <person name="Zeigler L."/>
            <person name="Asolkar R.N."/>
            <person name="Singan V."/>
            <person name="Lapidus A."/>
            <person name="Fenical W."/>
            <person name="Jensen P.R."/>
            <person name="Moore B.S."/>
        </authorList>
    </citation>
    <scope>NUCLEOTIDE SEQUENCE [LARGE SCALE GENOMIC DNA]</scope>
    <source>
        <strain>ATCC BAA-916 / DSM 44818 / JCM 13857 / NBRC 105044 / CNB-440</strain>
    </source>
</reference>
<evidence type="ECO:0000255" key="1">
    <source>
        <dbReference type="HAMAP-Rule" id="MF_00374"/>
    </source>
</evidence>
<evidence type="ECO:0000305" key="2"/>
<gene>
    <name evidence="1" type="primary">rpmC</name>
    <name type="ordered locus">Strop_3915</name>
</gene>
<sequence length="78" mass="8737">MAAGVKAAELRELSEEELVTKLREAKAELFNLRVQAATGQLDNNRRLQVIRREIARIYTIMRERELGLSAAPTEVTAG</sequence>
<protein>
    <recommendedName>
        <fullName evidence="1">Large ribosomal subunit protein uL29</fullName>
    </recommendedName>
    <alternativeName>
        <fullName evidence="2">50S ribosomal protein L29</fullName>
    </alternativeName>
</protein>
<name>RL29_SALTO</name>
<organism>
    <name type="scientific">Salinispora tropica (strain ATCC BAA-916 / DSM 44818 / JCM 13857 / NBRC 105044 / CNB-440)</name>
    <dbReference type="NCBI Taxonomy" id="369723"/>
    <lineage>
        <taxon>Bacteria</taxon>
        <taxon>Bacillati</taxon>
        <taxon>Actinomycetota</taxon>
        <taxon>Actinomycetes</taxon>
        <taxon>Micromonosporales</taxon>
        <taxon>Micromonosporaceae</taxon>
        <taxon>Salinispora</taxon>
    </lineage>
</organism>
<feature type="chain" id="PRO_1000079903" description="Large ribosomal subunit protein uL29">
    <location>
        <begin position="1"/>
        <end position="78"/>
    </location>
</feature>
<accession>A4XBN8</accession>